<name>PGLR3_MAIZE</name>
<protein>
    <recommendedName>
        <fullName>Exopolygalacturonase</fullName>
        <shortName>ExoPG</shortName>
        <ecNumber>3.2.1.67</ecNumber>
    </recommendedName>
    <alternativeName>
        <fullName>Galacturan 1,4-alpha-galacturonidase</fullName>
    </alternativeName>
    <alternativeName>
        <fullName>Pectinase</fullName>
    </alternativeName>
</protein>
<organism>
    <name type="scientific">Zea mays</name>
    <name type="common">Maize</name>
    <dbReference type="NCBI Taxonomy" id="4577"/>
    <lineage>
        <taxon>Eukaryota</taxon>
        <taxon>Viridiplantae</taxon>
        <taxon>Streptophyta</taxon>
        <taxon>Embryophyta</taxon>
        <taxon>Tracheophyta</taxon>
        <taxon>Spermatophyta</taxon>
        <taxon>Magnoliopsida</taxon>
        <taxon>Liliopsida</taxon>
        <taxon>Poales</taxon>
        <taxon>Poaceae</taxon>
        <taxon>PACMAD clade</taxon>
        <taxon>Panicoideae</taxon>
        <taxon>Andropogonodae</taxon>
        <taxon>Andropogoneae</taxon>
        <taxon>Tripsacinae</taxon>
        <taxon>Zea</taxon>
    </lineage>
</organism>
<keyword id="KW-0134">Cell wall</keyword>
<keyword id="KW-0961">Cell wall biogenesis/degradation</keyword>
<keyword id="KW-1015">Disulfide bond</keyword>
<keyword id="KW-0325">Glycoprotein</keyword>
<keyword id="KW-0326">Glycosidase</keyword>
<keyword id="KW-0378">Hydrolase</keyword>
<keyword id="KW-1185">Reference proteome</keyword>
<keyword id="KW-0677">Repeat</keyword>
<keyword id="KW-0964">Secreted</keyword>
<keyword id="KW-0732">Signal</keyword>
<sequence length="410" mass="43297">MACIDNAMRALFLLALFCVVHGEKAKSKDNDAKASGPGGSFDITKLGASGNGKTDSTKAVQEAWASACGGTGKQTILIPKGDFLVGPLNFTGPCKGDVTIQVNGNLLATTDLSQYKDHGNWIEILRVDNLVITGKGKLDGQGPAVWSKNSCVKKYDCKILPNSLVMDFVNNGEVSGITLLNSKFFHMNMYKCKDMLIKDVNVTAPGDSPNTDGIHMGDSSGVTITNTVIGVGDDCISIGPGTSKVNITGVTCGPGHGISIGSLGRYKDEKDVTDINVKDCTLKKTANGVRIKAYEDAASVLTASKIHYENIKMEDSGYPIIIDMKYCPNKLCTANGASKVTVKDVTFKNITGTSSTPEAVNLLCTAKIPCTGVTMDDVNIKYSGTNNKTMAVCKNAKGSAKGCLKELACF</sequence>
<proteinExistence type="evidence at transcript level"/>
<dbReference type="EC" id="3.2.1.67"/>
<dbReference type="EMBL" id="X66422">
    <property type="protein sequence ID" value="CAA47052.1"/>
    <property type="molecule type" value="Genomic_DNA"/>
</dbReference>
<dbReference type="PIR" id="S30067">
    <property type="entry name" value="S30067"/>
</dbReference>
<dbReference type="SMR" id="P35339"/>
<dbReference type="FunCoup" id="P35339">
    <property type="interactions" value="75"/>
</dbReference>
<dbReference type="STRING" id="4577.P35339"/>
<dbReference type="Allergome" id="683">
    <property type="allergen name" value="Zea m 13"/>
</dbReference>
<dbReference type="CAZy" id="GH28">
    <property type="family name" value="Glycoside Hydrolase Family 28"/>
</dbReference>
<dbReference type="GlyCosmos" id="P35339">
    <property type="glycosylation" value="5 sites, No reported glycans"/>
</dbReference>
<dbReference type="PaxDb" id="4577-GRMZM2G160526_P01"/>
<dbReference type="MaizeGDB" id="65847"/>
<dbReference type="eggNOG" id="ENOG502QRSR">
    <property type="taxonomic scope" value="Eukaryota"/>
</dbReference>
<dbReference type="InParanoid" id="P35339"/>
<dbReference type="Proteomes" id="UP000007305">
    <property type="component" value="Unplaced"/>
</dbReference>
<dbReference type="ExpressionAtlas" id="P35339">
    <property type="expression patterns" value="baseline"/>
</dbReference>
<dbReference type="GO" id="GO:0005576">
    <property type="term" value="C:extracellular region"/>
    <property type="evidence" value="ECO:0007669"/>
    <property type="project" value="UniProtKB-SubCell"/>
</dbReference>
<dbReference type="GO" id="GO:0047911">
    <property type="term" value="F:galacturan 1,4-alpha-galacturonidase activity"/>
    <property type="evidence" value="ECO:0007669"/>
    <property type="project" value="UniProtKB-EC"/>
</dbReference>
<dbReference type="GO" id="GO:0004650">
    <property type="term" value="F:polygalacturonase activity"/>
    <property type="evidence" value="ECO:0007669"/>
    <property type="project" value="InterPro"/>
</dbReference>
<dbReference type="GO" id="GO:0005975">
    <property type="term" value="P:carbohydrate metabolic process"/>
    <property type="evidence" value="ECO:0007669"/>
    <property type="project" value="InterPro"/>
</dbReference>
<dbReference type="GO" id="GO:0071555">
    <property type="term" value="P:cell wall organization"/>
    <property type="evidence" value="ECO:0007669"/>
    <property type="project" value="UniProtKB-KW"/>
</dbReference>
<dbReference type="FunFam" id="2.160.20.10:FF:000004">
    <property type="entry name" value="Pectin lyase-like superfamily protein"/>
    <property type="match status" value="1"/>
</dbReference>
<dbReference type="Gene3D" id="2.160.20.10">
    <property type="entry name" value="Single-stranded right-handed beta-helix, Pectin lyase-like"/>
    <property type="match status" value="1"/>
</dbReference>
<dbReference type="InterPro" id="IPR000743">
    <property type="entry name" value="Glyco_hydro_28"/>
</dbReference>
<dbReference type="InterPro" id="IPR006626">
    <property type="entry name" value="PbH1"/>
</dbReference>
<dbReference type="InterPro" id="IPR012334">
    <property type="entry name" value="Pectin_lyas_fold"/>
</dbReference>
<dbReference type="InterPro" id="IPR011050">
    <property type="entry name" value="Pectin_lyase_fold/virulence"/>
</dbReference>
<dbReference type="PANTHER" id="PTHR31375">
    <property type="match status" value="1"/>
</dbReference>
<dbReference type="Pfam" id="PF00295">
    <property type="entry name" value="Glyco_hydro_28"/>
    <property type="match status" value="1"/>
</dbReference>
<dbReference type="SMART" id="SM00710">
    <property type="entry name" value="PbH1"/>
    <property type="match status" value="5"/>
</dbReference>
<dbReference type="SUPFAM" id="SSF51126">
    <property type="entry name" value="Pectin lyase-like"/>
    <property type="match status" value="1"/>
</dbReference>
<dbReference type="PROSITE" id="PS00502">
    <property type="entry name" value="POLYGALACTURONASE"/>
    <property type="match status" value="1"/>
</dbReference>
<comment type="function">
    <text>May function in depolymerizing pectin during pollen development, germination, and tube growth. Acts as an exo-polygalacturonase.</text>
</comment>
<comment type="catalytic activity">
    <reaction>
        <text>[(1-&gt;4)-alpha-D-galacturonosyl](n) + H2O = alpha-D-galacturonate + [(1-&gt;4)-alpha-D-galacturonosyl](n-1)</text>
        <dbReference type="Rhea" id="RHEA:14117"/>
        <dbReference type="Rhea" id="RHEA-COMP:14570"/>
        <dbReference type="Rhea" id="RHEA-COMP:14572"/>
        <dbReference type="ChEBI" id="CHEBI:15377"/>
        <dbReference type="ChEBI" id="CHEBI:58658"/>
        <dbReference type="ChEBI" id="CHEBI:140523"/>
        <dbReference type="EC" id="3.2.1.67"/>
    </reaction>
</comment>
<comment type="subcellular location">
    <subcellularLocation>
        <location>Secreted</location>
    </subcellularLocation>
    <subcellularLocation>
        <location>Secreted</location>
        <location>Cell wall</location>
    </subcellularLocation>
</comment>
<comment type="tissue specificity">
    <text>Pollen.</text>
</comment>
<comment type="developmental stage">
    <text>Late stages of pollen development.</text>
</comment>
<comment type="similarity">
    <text evidence="5">Belongs to the glycosyl hydrolase 28 family.</text>
</comment>
<gene>
    <name type="primary">PG2C</name>
</gene>
<reference key="1">
    <citation type="journal article" date="1993" name="J. Mol. Biol.">
        <title>Characterization of a multigene family encoding an exopolygalacturonase in maize.</title>
        <authorList>
            <person name="Barakate A."/>
            <person name="Martin W."/>
            <person name="Quigley F."/>
            <person name="Mache R."/>
        </authorList>
    </citation>
    <scope>NUCLEOTIDE SEQUENCE [GENOMIC DNA]</scope>
    <source>
        <strain>cv. Missouri 17</strain>
        <tissue>Leaf</tissue>
    </source>
</reference>
<evidence type="ECO:0000250" key="1">
    <source>
        <dbReference type="UniProtKB" id="O74213"/>
    </source>
</evidence>
<evidence type="ECO:0000255" key="2"/>
<evidence type="ECO:0000255" key="3">
    <source>
        <dbReference type="PROSITE-ProRule" id="PRU00498"/>
    </source>
</evidence>
<evidence type="ECO:0000255" key="4">
    <source>
        <dbReference type="PROSITE-ProRule" id="PRU10052"/>
    </source>
</evidence>
<evidence type="ECO:0000305" key="5"/>
<accession>P35339</accession>
<feature type="signal peptide">
    <location>
        <begin position="1"/>
        <end position="22"/>
    </location>
</feature>
<feature type="chain" id="PRO_0000024808" description="Exopolygalacturonase">
    <location>
        <begin position="23"/>
        <end position="410"/>
    </location>
</feature>
<feature type="repeat" description="PbH1 1" evidence="2">
    <location>
        <begin position="192"/>
        <end position="218"/>
    </location>
</feature>
<feature type="repeat" description="PbH1 2" evidence="2">
    <location>
        <begin position="219"/>
        <end position="240"/>
    </location>
</feature>
<feature type="repeat" description="PbH1 3" evidence="2">
    <location>
        <begin position="242"/>
        <end position="262"/>
    </location>
</feature>
<feature type="repeat" description="PbH1 4" evidence="2">
    <location>
        <begin position="272"/>
        <end position="293"/>
    </location>
</feature>
<feature type="repeat" description="PbH1 5" evidence="2">
    <location>
        <begin position="337"/>
        <end position="377"/>
    </location>
</feature>
<feature type="active site" description="Proton donor" evidence="1">
    <location>
        <position position="233"/>
    </location>
</feature>
<feature type="active site" evidence="4">
    <location>
        <position position="256"/>
    </location>
</feature>
<feature type="glycosylation site" description="N-linked (GlcNAc...) asparagine" evidence="3">
    <location>
        <position position="89"/>
    </location>
</feature>
<feature type="glycosylation site" description="N-linked (GlcNAc...) asparagine" evidence="3">
    <location>
        <position position="201"/>
    </location>
</feature>
<feature type="glycosylation site" description="N-linked (GlcNAc...) asparagine" evidence="3">
    <location>
        <position position="246"/>
    </location>
</feature>
<feature type="glycosylation site" description="N-linked (GlcNAc...) asparagine" evidence="3">
    <location>
        <position position="349"/>
    </location>
</feature>
<feature type="glycosylation site" description="N-linked (GlcNAc...) asparagine" evidence="3">
    <location>
        <position position="387"/>
    </location>
</feature>
<feature type="disulfide bond" evidence="1">
    <location>
        <begin position="235"/>
        <end position="252"/>
    </location>
</feature>
<feature type="disulfide bond" evidence="1">
    <location>
        <begin position="364"/>
        <end position="370"/>
    </location>
</feature>
<feature type="disulfide bond" evidence="1">
    <location>
        <begin position="393"/>
        <end position="409"/>
    </location>
</feature>